<sequence length="301" mass="33809">MKQRTIAKNVDIVGIGLHKGVPVKMRLEPLDSDMGIIFYRSDAGVTIPVKKEFVVDTKMATVIGKDGVVISTIEHLLSAIYAYGIDNLRIVLDNDEVPVLDGSSAGYCMLIEEAGIKELEKSKKAIKIKKEIEITTEDGKRVTLKPSDRIVYDFEINFEHPAIGKQKFHFDYSIEEYKNNISRARTFGFLHEVQYLRSIGLAQGGSMENAIVLDKTKVLNPEGLRFDDEFVRHKILDAIGDMALLEYTLVGEYDAVAGSHHLNHLLTKKLYEDEANYEIIDLEEASSEASVFEMAYSKVES</sequence>
<gene>
    <name evidence="1" type="primary">lpxC</name>
    <name type="ordered locus">Abu_2039</name>
</gene>
<accession>A8EWD3</accession>
<name>LPXC_ALIB4</name>
<keyword id="KW-0378">Hydrolase</keyword>
<keyword id="KW-0441">Lipid A biosynthesis</keyword>
<keyword id="KW-0444">Lipid biosynthesis</keyword>
<keyword id="KW-0443">Lipid metabolism</keyword>
<keyword id="KW-0479">Metal-binding</keyword>
<keyword id="KW-1185">Reference proteome</keyword>
<keyword id="KW-0862">Zinc</keyword>
<proteinExistence type="inferred from homology"/>
<protein>
    <recommendedName>
        <fullName evidence="1">UDP-3-O-acyl-N-acetylglucosamine deacetylase</fullName>
        <shortName evidence="1">UDP-3-O-acyl-GlcNAc deacetylase</shortName>
        <ecNumber evidence="1">3.5.1.108</ecNumber>
    </recommendedName>
    <alternativeName>
        <fullName evidence="1">UDP-3-O-[R-3-hydroxymyristoyl]-N-acetylglucosamine deacetylase</fullName>
    </alternativeName>
</protein>
<reference key="1">
    <citation type="journal article" date="2007" name="PLoS ONE">
        <title>The complete genome sequence and analysis of the Epsilonproteobacterium Arcobacter butzleri.</title>
        <authorList>
            <person name="Miller W.G."/>
            <person name="Parker C.T."/>
            <person name="Rubenfield M."/>
            <person name="Mendz G.L."/>
            <person name="Woesten M.M.S.M."/>
            <person name="Ussery D.W."/>
            <person name="Stolz J.F."/>
            <person name="Binnewies T.T."/>
            <person name="Hallin P.F."/>
            <person name="Wang G."/>
            <person name="Malek J.A."/>
            <person name="Rogosin A."/>
            <person name="Stanker L.H."/>
            <person name="Mandrell R.E."/>
        </authorList>
    </citation>
    <scope>NUCLEOTIDE SEQUENCE [LARGE SCALE GENOMIC DNA]</scope>
    <source>
        <strain>RM4018</strain>
    </source>
</reference>
<feature type="chain" id="PRO_1000190885" description="UDP-3-O-acyl-N-acetylglucosamine deacetylase">
    <location>
        <begin position="1"/>
        <end position="301"/>
    </location>
</feature>
<feature type="active site" description="Proton donor" evidence="1">
    <location>
        <position position="260"/>
    </location>
</feature>
<feature type="binding site" evidence="1">
    <location>
        <position position="75"/>
    </location>
    <ligand>
        <name>Zn(2+)</name>
        <dbReference type="ChEBI" id="CHEBI:29105"/>
    </ligand>
</feature>
<feature type="binding site" evidence="1">
    <location>
        <position position="233"/>
    </location>
    <ligand>
        <name>Zn(2+)</name>
        <dbReference type="ChEBI" id="CHEBI:29105"/>
    </ligand>
</feature>
<feature type="binding site" evidence="1">
    <location>
        <position position="237"/>
    </location>
    <ligand>
        <name>Zn(2+)</name>
        <dbReference type="ChEBI" id="CHEBI:29105"/>
    </ligand>
</feature>
<comment type="function">
    <text evidence="1">Catalyzes the hydrolysis of UDP-3-O-myristoyl-N-acetylglucosamine to form UDP-3-O-myristoylglucosamine and acetate, the committed step in lipid A biosynthesis.</text>
</comment>
<comment type="catalytic activity">
    <reaction evidence="1">
        <text>a UDP-3-O-[(3R)-3-hydroxyacyl]-N-acetyl-alpha-D-glucosamine + H2O = a UDP-3-O-[(3R)-3-hydroxyacyl]-alpha-D-glucosamine + acetate</text>
        <dbReference type="Rhea" id="RHEA:67816"/>
        <dbReference type="ChEBI" id="CHEBI:15377"/>
        <dbReference type="ChEBI" id="CHEBI:30089"/>
        <dbReference type="ChEBI" id="CHEBI:137740"/>
        <dbReference type="ChEBI" id="CHEBI:173225"/>
        <dbReference type="EC" id="3.5.1.108"/>
    </reaction>
</comment>
<comment type="cofactor">
    <cofactor evidence="1">
        <name>Zn(2+)</name>
        <dbReference type="ChEBI" id="CHEBI:29105"/>
    </cofactor>
</comment>
<comment type="pathway">
    <text evidence="1">Glycolipid biosynthesis; lipid IV(A) biosynthesis; lipid IV(A) from (3R)-3-hydroxytetradecanoyl-[acyl-carrier-protein] and UDP-N-acetyl-alpha-D-glucosamine: step 2/6.</text>
</comment>
<comment type="similarity">
    <text evidence="1">Belongs to the LpxC family.</text>
</comment>
<dbReference type="EC" id="3.5.1.108" evidence="1"/>
<dbReference type="EMBL" id="CP000361">
    <property type="protein sequence ID" value="ABV68256.1"/>
    <property type="molecule type" value="Genomic_DNA"/>
</dbReference>
<dbReference type="RefSeq" id="WP_004510926.1">
    <property type="nucleotide sequence ID" value="NC_009850.1"/>
</dbReference>
<dbReference type="SMR" id="A8EWD3"/>
<dbReference type="STRING" id="367737.Abu_2039"/>
<dbReference type="GeneID" id="24304181"/>
<dbReference type="KEGG" id="abu:Abu_2039"/>
<dbReference type="eggNOG" id="COG0774">
    <property type="taxonomic scope" value="Bacteria"/>
</dbReference>
<dbReference type="HOGENOM" id="CLU_046528_1_0_7"/>
<dbReference type="UniPathway" id="UPA00359">
    <property type="reaction ID" value="UER00478"/>
</dbReference>
<dbReference type="Proteomes" id="UP000001136">
    <property type="component" value="Chromosome"/>
</dbReference>
<dbReference type="GO" id="GO:0016020">
    <property type="term" value="C:membrane"/>
    <property type="evidence" value="ECO:0007669"/>
    <property type="project" value="GOC"/>
</dbReference>
<dbReference type="GO" id="GO:0046872">
    <property type="term" value="F:metal ion binding"/>
    <property type="evidence" value="ECO:0007669"/>
    <property type="project" value="UniProtKB-KW"/>
</dbReference>
<dbReference type="GO" id="GO:0103117">
    <property type="term" value="F:UDP-3-O-acyl-N-acetylglucosamine deacetylase activity"/>
    <property type="evidence" value="ECO:0007669"/>
    <property type="project" value="UniProtKB-UniRule"/>
</dbReference>
<dbReference type="GO" id="GO:0009245">
    <property type="term" value="P:lipid A biosynthetic process"/>
    <property type="evidence" value="ECO:0007669"/>
    <property type="project" value="UniProtKB-UniRule"/>
</dbReference>
<dbReference type="Gene3D" id="3.30.230.20">
    <property type="entry name" value="lpxc deacetylase, domain 1"/>
    <property type="match status" value="1"/>
</dbReference>
<dbReference type="Gene3D" id="3.30.1700.10">
    <property type="entry name" value="lpxc deacetylase, domain 2"/>
    <property type="match status" value="1"/>
</dbReference>
<dbReference type="HAMAP" id="MF_00388">
    <property type="entry name" value="LpxC"/>
    <property type="match status" value="1"/>
</dbReference>
<dbReference type="InterPro" id="IPR020568">
    <property type="entry name" value="Ribosomal_Su5_D2-typ_SF"/>
</dbReference>
<dbReference type="InterPro" id="IPR004463">
    <property type="entry name" value="UDP-acyl_GlcNac_deAcase"/>
</dbReference>
<dbReference type="InterPro" id="IPR011334">
    <property type="entry name" value="UDP-acyl_GlcNac_deAcase_C"/>
</dbReference>
<dbReference type="InterPro" id="IPR015870">
    <property type="entry name" value="UDP-acyl_N-AcGlcN_deAcase_N"/>
</dbReference>
<dbReference type="NCBIfam" id="TIGR00325">
    <property type="entry name" value="lpxC"/>
    <property type="match status" value="1"/>
</dbReference>
<dbReference type="PANTHER" id="PTHR33694">
    <property type="entry name" value="UDP-3-O-ACYL-N-ACETYLGLUCOSAMINE DEACETYLASE 1, MITOCHONDRIAL-RELATED"/>
    <property type="match status" value="1"/>
</dbReference>
<dbReference type="PANTHER" id="PTHR33694:SF1">
    <property type="entry name" value="UDP-3-O-ACYL-N-ACETYLGLUCOSAMINE DEACETYLASE 1, MITOCHONDRIAL-RELATED"/>
    <property type="match status" value="1"/>
</dbReference>
<dbReference type="Pfam" id="PF03331">
    <property type="entry name" value="LpxC"/>
    <property type="match status" value="1"/>
</dbReference>
<dbReference type="SUPFAM" id="SSF54211">
    <property type="entry name" value="Ribosomal protein S5 domain 2-like"/>
    <property type="match status" value="2"/>
</dbReference>
<evidence type="ECO:0000255" key="1">
    <source>
        <dbReference type="HAMAP-Rule" id="MF_00388"/>
    </source>
</evidence>
<organism>
    <name type="scientific">Aliarcobacter butzleri (strain RM4018)</name>
    <name type="common">Arcobacter butzleri</name>
    <dbReference type="NCBI Taxonomy" id="367737"/>
    <lineage>
        <taxon>Bacteria</taxon>
        <taxon>Pseudomonadati</taxon>
        <taxon>Campylobacterota</taxon>
        <taxon>Epsilonproteobacteria</taxon>
        <taxon>Campylobacterales</taxon>
        <taxon>Arcobacteraceae</taxon>
        <taxon>Aliarcobacter</taxon>
    </lineage>
</organism>